<reference key="1">
    <citation type="journal article" date="2005" name="Genome Res.">
        <title>Living with two extremes: conclusions from the genome sequence of Natronomonas pharaonis.</title>
        <authorList>
            <person name="Falb M."/>
            <person name="Pfeiffer F."/>
            <person name="Palm P."/>
            <person name="Rodewald K."/>
            <person name="Hickmann V."/>
            <person name="Tittor J."/>
            <person name="Oesterhelt D."/>
        </authorList>
    </citation>
    <scope>NUCLEOTIDE SEQUENCE [LARGE SCALE GENOMIC DNA]</scope>
    <source>
        <strain>ATCC 35678 / DSM 2160 / CIP 103997 / JCM 8858 / NBRC 14720 / NCIMB 2260 / Gabara</strain>
    </source>
</reference>
<keyword id="KW-1185">Reference proteome</keyword>
<keyword id="KW-0687">Ribonucleoprotein</keyword>
<keyword id="KW-0689">Ribosomal protein</keyword>
<keyword id="KW-0694">RNA-binding</keyword>
<keyword id="KW-0699">rRNA-binding</keyword>
<comment type="function">
    <text evidence="1">This is one of the proteins that bind and probably mediate the attachment of the 5S RNA into the large ribosomal subunit, where it forms part of the central protuberance.</text>
</comment>
<comment type="subunit">
    <text evidence="1">Part of the 50S ribosomal subunit. Contacts the 5S and 23S rRNAs.</text>
</comment>
<comment type="similarity">
    <text evidence="1">Belongs to the universal ribosomal protein uL18 family.</text>
</comment>
<feature type="chain" id="PRO_0000251400" description="Large ribosomal subunit protein uL18">
    <location>
        <begin position="1"/>
        <end position="184"/>
    </location>
</feature>
<proteinExistence type="inferred from homology"/>
<protein>
    <recommendedName>
        <fullName evidence="1">Large ribosomal subunit protein uL18</fullName>
    </recommendedName>
    <alternativeName>
        <fullName evidence="2">50S ribosomal protein L18</fullName>
    </alternativeName>
</protein>
<sequence length="184" mass="20201">MATGPRYTVPMRRRREARTNYHQRLRLLKSGKPRLVARKSNNQTKAQLVVTGPQGDETVASATSADLEAFGWEAPTGNLPAAYLTGLLAGKRAIEAGLDEAVLDIGLNTATPGNKVFAVQEGVIDAGLEVPHNEDVFADWQRTRGAHIAEYAEQLEDGLYSGDFDATELPDHFDEVRERVEDEL</sequence>
<accession>Q3IMW9</accession>
<name>RL18_NATPD</name>
<dbReference type="EMBL" id="CR936257">
    <property type="protein sequence ID" value="CAI50537.1"/>
    <property type="molecule type" value="Genomic_DNA"/>
</dbReference>
<dbReference type="RefSeq" id="WP_011324149.1">
    <property type="nucleotide sequence ID" value="NC_007426.1"/>
</dbReference>
<dbReference type="SMR" id="Q3IMW9"/>
<dbReference type="STRING" id="348780.NP_4892A"/>
<dbReference type="EnsemblBacteria" id="CAI50537">
    <property type="protein sequence ID" value="CAI50537"/>
    <property type="gene ID" value="NP_4892A"/>
</dbReference>
<dbReference type="GeneID" id="3703127"/>
<dbReference type="KEGG" id="nph:NP_4892A"/>
<dbReference type="eggNOG" id="arCOG04088">
    <property type="taxonomic scope" value="Archaea"/>
</dbReference>
<dbReference type="HOGENOM" id="CLU_056222_2_0_2"/>
<dbReference type="OrthoDB" id="8644at2157"/>
<dbReference type="Proteomes" id="UP000002698">
    <property type="component" value="Chromosome"/>
</dbReference>
<dbReference type="GO" id="GO:0022625">
    <property type="term" value="C:cytosolic large ribosomal subunit"/>
    <property type="evidence" value="ECO:0007669"/>
    <property type="project" value="TreeGrafter"/>
</dbReference>
<dbReference type="GO" id="GO:0008097">
    <property type="term" value="F:5S rRNA binding"/>
    <property type="evidence" value="ECO:0007669"/>
    <property type="project" value="InterPro"/>
</dbReference>
<dbReference type="GO" id="GO:0003735">
    <property type="term" value="F:structural constituent of ribosome"/>
    <property type="evidence" value="ECO:0007669"/>
    <property type="project" value="InterPro"/>
</dbReference>
<dbReference type="GO" id="GO:0000027">
    <property type="term" value="P:ribosomal large subunit assembly"/>
    <property type="evidence" value="ECO:0007669"/>
    <property type="project" value="TreeGrafter"/>
</dbReference>
<dbReference type="GO" id="GO:0006412">
    <property type="term" value="P:translation"/>
    <property type="evidence" value="ECO:0007669"/>
    <property type="project" value="UniProtKB-UniRule"/>
</dbReference>
<dbReference type="CDD" id="cd00432">
    <property type="entry name" value="Ribosomal_L18_L5e"/>
    <property type="match status" value="1"/>
</dbReference>
<dbReference type="FunFam" id="3.30.420.100:FF:000008">
    <property type="entry name" value="50S ribosomal protein L18"/>
    <property type="match status" value="1"/>
</dbReference>
<dbReference type="Gene3D" id="3.30.420.100">
    <property type="match status" value="1"/>
</dbReference>
<dbReference type="HAMAP" id="MF_01337_A">
    <property type="entry name" value="Ribosomal_uL18_A"/>
    <property type="match status" value="1"/>
</dbReference>
<dbReference type="InterPro" id="IPR005485">
    <property type="entry name" value="Rbsml_uL18_euk"/>
</dbReference>
<dbReference type="NCBIfam" id="NF006342">
    <property type="entry name" value="PRK08569.1"/>
    <property type="match status" value="1"/>
</dbReference>
<dbReference type="PANTHER" id="PTHR23410:SF12">
    <property type="entry name" value="LARGE RIBOSOMAL SUBUNIT PROTEIN UL18"/>
    <property type="match status" value="1"/>
</dbReference>
<dbReference type="PANTHER" id="PTHR23410">
    <property type="entry name" value="RIBOSOMAL PROTEIN L5-RELATED"/>
    <property type="match status" value="1"/>
</dbReference>
<dbReference type="Pfam" id="PF17144">
    <property type="entry name" value="Ribosomal_L5e"/>
    <property type="match status" value="2"/>
</dbReference>
<dbReference type="SUPFAM" id="SSF53137">
    <property type="entry name" value="Translational machinery components"/>
    <property type="match status" value="1"/>
</dbReference>
<evidence type="ECO:0000255" key="1">
    <source>
        <dbReference type="HAMAP-Rule" id="MF_01337"/>
    </source>
</evidence>
<evidence type="ECO:0000305" key="2"/>
<organism>
    <name type="scientific">Natronomonas pharaonis (strain ATCC 35678 / DSM 2160 / CIP 103997 / JCM 8858 / NBRC 14720 / NCIMB 2260 / Gabara)</name>
    <name type="common">Halobacterium pharaonis</name>
    <dbReference type="NCBI Taxonomy" id="348780"/>
    <lineage>
        <taxon>Archaea</taxon>
        <taxon>Methanobacteriati</taxon>
        <taxon>Methanobacteriota</taxon>
        <taxon>Stenosarchaea group</taxon>
        <taxon>Halobacteria</taxon>
        <taxon>Halobacteriales</taxon>
        <taxon>Haloarculaceae</taxon>
        <taxon>Natronomonas</taxon>
    </lineage>
</organism>
<gene>
    <name evidence="1" type="primary">rpl18</name>
    <name type="ordered locus">NP_4892A</name>
</gene>